<keyword id="KW-0349">Heme</keyword>
<keyword id="KW-0376">Hydrogen peroxide</keyword>
<keyword id="KW-0408">Iron</keyword>
<keyword id="KW-0479">Metal-binding</keyword>
<keyword id="KW-0560">Oxidoreductase</keyword>
<keyword id="KW-0575">Peroxidase</keyword>
<gene>
    <name evidence="1" type="primary">katG</name>
    <name type="ordered locus">Minf_2274</name>
</gene>
<protein>
    <recommendedName>
        <fullName evidence="1">Catalase-peroxidase</fullName>
        <shortName evidence="1">CP</shortName>
        <ecNumber evidence="1">1.11.1.21</ecNumber>
    </recommendedName>
    <alternativeName>
        <fullName evidence="1">Peroxidase/catalase</fullName>
    </alternativeName>
</protein>
<name>KATG_METI4</name>
<sequence length="726" mass="80954">MTTEGSCPFHHTAAIGGLKTNEEWWPNRLNLKILRQNSPLSNPMGAGFNYAKEFCSLDLSALKEDLRRLMTDSQQWWPADFGHYGPLFIRMAWHSAGTYRVHDGRGGAGSGQQRFAPLNSWPDNVLLDKARRLLWPIKQKYGRKISWADLIILAGNVALESMGLKTFGFGGGRVDSWEPDESVYWGVEQKWLEDKRYSGKRDLEQPLAAVQMGLIYVNPEGPNGNPDPVAAAVDIRETFTRMGMNDAETVALIAGGHTFGKAHGAGPASFVGPEPEAAGIAEQGLGWRSSYRSGKGADAIGSGLEVIWTRTPTRWNNDYFQFLFEYEWEPTKSPAGAWQWVAKDAPEIVPDPFDPAKKRKPTMLTTDLSLRFDPVYEKIARAYYEQPDLFADAFARAWFKLTHRDMGPRSRYLGPEVPKEDLLWQDPIPPVDHPLIETDDMNSLKAKILESGLTVRELVFTAWSSASTFRGSDKRGGANGARIRLSPQKDWPANEPTQLARVLAVLEQIQKEFNARSPKKVSMADLIVLGGCAGVEQAARNGGRSVVVPFIPGRSDALEEQTDVESFAFLEPWADGFRNFYKKGCSVPQEALLVDKAQLLTLTAPEMTVLVGGMRVLDANVGRSRHGVFTDRPGALTNDFFVNLLDMDTEWKPVDEREELFEGRDRKTGTLLWTATRVDLIFGSNSELRAISEVYGAADAQDKFVKDFISAWNKVMNLDRFDLAPA</sequence>
<accession>B3E099</accession>
<proteinExistence type="inferred from homology"/>
<organism>
    <name type="scientific">Methylacidiphilum infernorum (isolate V4)</name>
    <name type="common">Methylokorus infernorum (strain V4)</name>
    <dbReference type="NCBI Taxonomy" id="481448"/>
    <lineage>
        <taxon>Bacteria</taxon>
        <taxon>Pseudomonadati</taxon>
        <taxon>Verrucomicrobiota</taxon>
        <taxon>Methylacidiphilae</taxon>
        <taxon>Methylacidiphilales</taxon>
        <taxon>Methylacidiphilaceae</taxon>
        <taxon>Methylacidiphilum (ex Ratnadevi et al. 2023)</taxon>
    </lineage>
</organism>
<reference key="1">
    <citation type="journal article" date="2008" name="Biol. Direct">
        <title>Complete genome sequence of the extremely acidophilic methanotroph isolate V4, Methylacidiphilum infernorum, a representative of the bacterial phylum Verrucomicrobia.</title>
        <authorList>
            <person name="Hou S."/>
            <person name="Makarova K.S."/>
            <person name="Saw J.H."/>
            <person name="Senin P."/>
            <person name="Ly B.V."/>
            <person name="Zhou Z."/>
            <person name="Ren Y."/>
            <person name="Wang J."/>
            <person name="Galperin M.Y."/>
            <person name="Omelchenko M.V."/>
            <person name="Wolf Y.I."/>
            <person name="Yutin N."/>
            <person name="Koonin E.V."/>
            <person name="Stott M.B."/>
            <person name="Mountain B.W."/>
            <person name="Crowe M.A."/>
            <person name="Smirnova A.V."/>
            <person name="Dunfield P.F."/>
            <person name="Feng L."/>
            <person name="Wang L."/>
            <person name="Alam M."/>
        </authorList>
    </citation>
    <scope>NUCLEOTIDE SEQUENCE [LARGE SCALE GENOMIC DNA]</scope>
    <source>
        <strain>Isolate V4</strain>
    </source>
</reference>
<comment type="function">
    <text evidence="1">Bifunctional enzyme with both catalase and broad-spectrum peroxidase activity.</text>
</comment>
<comment type="catalytic activity">
    <reaction evidence="1">
        <text>H2O2 + AH2 = A + 2 H2O</text>
        <dbReference type="Rhea" id="RHEA:30275"/>
        <dbReference type="ChEBI" id="CHEBI:13193"/>
        <dbReference type="ChEBI" id="CHEBI:15377"/>
        <dbReference type="ChEBI" id="CHEBI:16240"/>
        <dbReference type="ChEBI" id="CHEBI:17499"/>
        <dbReference type="EC" id="1.11.1.21"/>
    </reaction>
</comment>
<comment type="catalytic activity">
    <reaction evidence="1">
        <text>2 H2O2 = O2 + 2 H2O</text>
        <dbReference type="Rhea" id="RHEA:20309"/>
        <dbReference type="ChEBI" id="CHEBI:15377"/>
        <dbReference type="ChEBI" id="CHEBI:15379"/>
        <dbReference type="ChEBI" id="CHEBI:16240"/>
        <dbReference type="EC" id="1.11.1.21"/>
    </reaction>
</comment>
<comment type="cofactor">
    <cofactor evidence="1">
        <name>heme b</name>
        <dbReference type="ChEBI" id="CHEBI:60344"/>
    </cofactor>
    <text evidence="1">Binds 1 heme b (iron(II)-protoporphyrin IX) group per dimer.</text>
</comment>
<comment type="subunit">
    <text evidence="1">Homodimer or homotetramer.</text>
</comment>
<comment type="PTM">
    <text evidence="1">Formation of the three residue Trp-Tyr-Met cross-link is important for the catalase, but not the peroxidase activity of the enzyme.</text>
</comment>
<comment type="similarity">
    <text evidence="1">Belongs to the peroxidase family. Peroxidase/catalase subfamily.</text>
</comment>
<feature type="chain" id="PRO_0000354831" description="Catalase-peroxidase">
    <location>
        <begin position="1"/>
        <end position="726"/>
    </location>
</feature>
<feature type="region of interest" description="Disordered" evidence="2">
    <location>
        <begin position="471"/>
        <end position="490"/>
    </location>
</feature>
<feature type="active site" description="Proton acceptor" evidence="1">
    <location>
        <position position="94"/>
    </location>
</feature>
<feature type="binding site" description="axial binding residue" evidence="1">
    <location>
        <position position="257"/>
    </location>
    <ligand>
        <name>heme b</name>
        <dbReference type="ChEBI" id="CHEBI:60344"/>
    </ligand>
    <ligandPart>
        <name>Fe</name>
        <dbReference type="ChEBI" id="CHEBI:18248"/>
    </ligandPart>
</feature>
<feature type="site" description="Transition state stabilizer" evidence="1">
    <location>
        <position position="90"/>
    </location>
</feature>
<feature type="cross-link" description="Tryptophyl-tyrosyl-methioninium (Trp-Tyr) (with M-242)" evidence="1">
    <location>
        <begin position="93"/>
        <end position="216"/>
    </location>
</feature>
<feature type="cross-link" description="Tryptophyl-tyrosyl-methioninium (Tyr-Met) (with W-93)" evidence="1">
    <location>
        <begin position="216"/>
        <end position="242"/>
    </location>
</feature>
<evidence type="ECO:0000255" key="1">
    <source>
        <dbReference type="HAMAP-Rule" id="MF_01961"/>
    </source>
</evidence>
<evidence type="ECO:0000256" key="2">
    <source>
        <dbReference type="SAM" id="MobiDB-lite"/>
    </source>
</evidence>
<dbReference type="EC" id="1.11.1.21" evidence="1"/>
<dbReference type="EMBL" id="CP000975">
    <property type="protein sequence ID" value="ACD84328.1"/>
    <property type="molecule type" value="Genomic_DNA"/>
</dbReference>
<dbReference type="RefSeq" id="WP_012464608.1">
    <property type="nucleotide sequence ID" value="NC_010794.1"/>
</dbReference>
<dbReference type="SMR" id="B3E099"/>
<dbReference type="STRING" id="481448.Minf_2274"/>
<dbReference type="KEGG" id="min:Minf_2274"/>
<dbReference type="eggNOG" id="COG0376">
    <property type="taxonomic scope" value="Bacteria"/>
</dbReference>
<dbReference type="HOGENOM" id="CLU_025424_2_0_0"/>
<dbReference type="OrthoDB" id="9759743at2"/>
<dbReference type="Proteomes" id="UP000009149">
    <property type="component" value="Chromosome"/>
</dbReference>
<dbReference type="GO" id="GO:0005829">
    <property type="term" value="C:cytosol"/>
    <property type="evidence" value="ECO:0007669"/>
    <property type="project" value="TreeGrafter"/>
</dbReference>
<dbReference type="GO" id="GO:0004096">
    <property type="term" value="F:catalase activity"/>
    <property type="evidence" value="ECO:0007669"/>
    <property type="project" value="UniProtKB-UniRule"/>
</dbReference>
<dbReference type="GO" id="GO:0020037">
    <property type="term" value="F:heme binding"/>
    <property type="evidence" value="ECO:0007669"/>
    <property type="project" value="InterPro"/>
</dbReference>
<dbReference type="GO" id="GO:0046872">
    <property type="term" value="F:metal ion binding"/>
    <property type="evidence" value="ECO:0007669"/>
    <property type="project" value="UniProtKB-KW"/>
</dbReference>
<dbReference type="GO" id="GO:0070301">
    <property type="term" value="P:cellular response to hydrogen peroxide"/>
    <property type="evidence" value="ECO:0007669"/>
    <property type="project" value="TreeGrafter"/>
</dbReference>
<dbReference type="GO" id="GO:0042744">
    <property type="term" value="P:hydrogen peroxide catabolic process"/>
    <property type="evidence" value="ECO:0007669"/>
    <property type="project" value="UniProtKB-KW"/>
</dbReference>
<dbReference type="CDD" id="cd00649">
    <property type="entry name" value="catalase_peroxidase_1"/>
    <property type="match status" value="1"/>
</dbReference>
<dbReference type="CDD" id="cd08200">
    <property type="entry name" value="catalase_peroxidase_2"/>
    <property type="match status" value="1"/>
</dbReference>
<dbReference type="FunFam" id="1.10.420.10:FF:000002">
    <property type="entry name" value="Catalase-peroxidase"/>
    <property type="match status" value="1"/>
</dbReference>
<dbReference type="FunFam" id="1.10.420.10:FF:000004">
    <property type="entry name" value="Catalase-peroxidase"/>
    <property type="match status" value="1"/>
</dbReference>
<dbReference type="FunFam" id="1.10.520.10:FF:000002">
    <property type="entry name" value="Catalase-peroxidase"/>
    <property type="match status" value="1"/>
</dbReference>
<dbReference type="Gene3D" id="1.10.520.10">
    <property type="match status" value="2"/>
</dbReference>
<dbReference type="Gene3D" id="1.10.420.10">
    <property type="entry name" value="Peroxidase, domain 2"/>
    <property type="match status" value="2"/>
</dbReference>
<dbReference type="HAMAP" id="MF_01961">
    <property type="entry name" value="Catal_peroxid"/>
    <property type="match status" value="1"/>
</dbReference>
<dbReference type="InterPro" id="IPR000763">
    <property type="entry name" value="Catalase_peroxidase"/>
</dbReference>
<dbReference type="InterPro" id="IPR002016">
    <property type="entry name" value="Haem_peroxidase"/>
</dbReference>
<dbReference type="InterPro" id="IPR010255">
    <property type="entry name" value="Haem_peroxidase_sf"/>
</dbReference>
<dbReference type="InterPro" id="IPR019794">
    <property type="entry name" value="Peroxidases_AS"/>
</dbReference>
<dbReference type="InterPro" id="IPR019793">
    <property type="entry name" value="Peroxidases_heam-ligand_BS"/>
</dbReference>
<dbReference type="NCBIfam" id="TIGR00198">
    <property type="entry name" value="cat_per_HPI"/>
    <property type="match status" value="1"/>
</dbReference>
<dbReference type="NCBIfam" id="NF011635">
    <property type="entry name" value="PRK15061.1"/>
    <property type="match status" value="1"/>
</dbReference>
<dbReference type="PANTHER" id="PTHR30555:SF0">
    <property type="entry name" value="CATALASE-PEROXIDASE"/>
    <property type="match status" value="1"/>
</dbReference>
<dbReference type="PANTHER" id="PTHR30555">
    <property type="entry name" value="HYDROPEROXIDASE I, BIFUNCTIONAL CATALASE-PEROXIDASE"/>
    <property type="match status" value="1"/>
</dbReference>
<dbReference type="Pfam" id="PF00141">
    <property type="entry name" value="peroxidase"/>
    <property type="match status" value="2"/>
</dbReference>
<dbReference type="PRINTS" id="PR00460">
    <property type="entry name" value="BPEROXIDASE"/>
</dbReference>
<dbReference type="PRINTS" id="PR00458">
    <property type="entry name" value="PEROXIDASE"/>
</dbReference>
<dbReference type="SUPFAM" id="SSF48113">
    <property type="entry name" value="Heme-dependent peroxidases"/>
    <property type="match status" value="2"/>
</dbReference>
<dbReference type="PROSITE" id="PS00435">
    <property type="entry name" value="PEROXIDASE_1"/>
    <property type="match status" value="1"/>
</dbReference>
<dbReference type="PROSITE" id="PS00436">
    <property type="entry name" value="PEROXIDASE_2"/>
    <property type="match status" value="1"/>
</dbReference>
<dbReference type="PROSITE" id="PS50873">
    <property type="entry name" value="PEROXIDASE_4"/>
    <property type="match status" value="2"/>
</dbReference>